<dbReference type="EC" id="3.1.-.-" evidence="1"/>
<dbReference type="EC" id="5.6.2.4" evidence="1"/>
<dbReference type="EMBL" id="CP000259">
    <property type="protein sequence ID" value="ABF31837.1"/>
    <property type="molecule type" value="Genomic_DNA"/>
</dbReference>
<dbReference type="SMR" id="Q1JMH5"/>
<dbReference type="KEGG" id="spk:MGAS9429_Spy0649"/>
<dbReference type="HOGENOM" id="CLU_001114_3_1_9"/>
<dbReference type="Proteomes" id="UP000002433">
    <property type="component" value="Chromosome"/>
</dbReference>
<dbReference type="GO" id="GO:0005829">
    <property type="term" value="C:cytosol"/>
    <property type="evidence" value="ECO:0007669"/>
    <property type="project" value="TreeGrafter"/>
</dbReference>
<dbReference type="GO" id="GO:0033202">
    <property type="term" value="C:DNA helicase complex"/>
    <property type="evidence" value="ECO:0007669"/>
    <property type="project" value="TreeGrafter"/>
</dbReference>
<dbReference type="GO" id="GO:0043138">
    <property type="term" value="F:3'-5' DNA helicase activity"/>
    <property type="evidence" value="ECO:0007669"/>
    <property type="project" value="UniProtKB-UniRule"/>
</dbReference>
<dbReference type="GO" id="GO:0008408">
    <property type="term" value="F:3'-5' exonuclease activity"/>
    <property type="evidence" value="ECO:0007669"/>
    <property type="project" value="UniProtKB-UniRule"/>
</dbReference>
<dbReference type="GO" id="GO:0005524">
    <property type="term" value="F:ATP binding"/>
    <property type="evidence" value="ECO:0007669"/>
    <property type="project" value="UniProtKB-UniRule"/>
</dbReference>
<dbReference type="GO" id="GO:0016887">
    <property type="term" value="F:ATP hydrolysis activity"/>
    <property type="evidence" value="ECO:0007669"/>
    <property type="project" value="RHEA"/>
</dbReference>
<dbReference type="GO" id="GO:0003690">
    <property type="term" value="F:double-stranded DNA binding"/>
    <property type="evidence" value="ECO:0007669"/>
    <property type="project" value="UniProtKB-UniRule"/>
</dbReference>
<dbReference type="GO" id="GO:0000724">
    <property type="term" value="P:double-strand break repair via homologous recombination"/>
    <property type="evidence" value="ECO:0007669"/>
    <property type="project" value="UniProtKB-UniRule"/>
</dbReference>
<dbReference type="CDD" id="cd17932">
    <property type="entry name" value="DEXQc_UvrD"/>
    <property type="match status" value="1"/>
</dbReference>
<dbReference type="Gene3D" id="3.90.320.10">
    <property type="match status" value="1"/>
</dbReference>
<dbReference type="Gene3D" id="3.40.50.300">
    <property type="entry name" value="P-loop containing nucleotide triphosphate hydrolases"/>
    <property type="match status" value="4"/>
</dbReference>
<dbReference type="Gene3D" id="1.10.486.10">
    <property type="entry name" value="PCRA, domain 4"/>
    <property type="match status" value="1"/>
</dbReference>
<dbReference type="HAMAP" id="MF_01451">
    <property type="entry name" value="AddA"/>
    <property type="match status" value="1"/>
</dbReference>
<dbReference type="InterPro" id="IPR014152">
    <property type="entry name" value="AddA"/>
</dbReference>
<dbReference type="InterPro" id="IPR014017">
    <property type="entry name" value="DNA_helicase_UvrD-like_C"/>
</dbReference>
<dbReference type="InterPro" id="IPR000212">
    <property type="entry name" value="DNA_helicase_UvrD/REP"/>
</dbReference>
<dbReference type="InterPro" id="IPR027417">
    <property type="entry name" value="P-loop_NTPase"/>
</dbReference>
<dbReference type="InterPro" id="IPR011604">
    <property type="entry name" value="PDDEXK-like_dom_sf"/>
</dbReference>
<dbReference type="InterPro" id="IPR038726">
    <property type="entry name" value="PDDEXK_AddAB-type"/>
</dbReference>
<dbReference type="InterPro" id="IPR011335">
    <property type="entry name" value="Restrct_endonuc-II-like"/>
</dbReference>
<dbReference type="InterPro" id="IPR014016">
    <property type="entry name" value="UvrD-like_ATP-bd"/>
</dbReference>
<dbReference type="NCBIfam" id="TIGR02785">
    <property type="entry name" value="addA_Gpos"/>
    <property type="match status" value="1"/>
</dbReference>
<dbReference type="PANTHER" id="PTHR11070:SF48">
    <property type="entry name" value="ATP-DEPENDENT HELICASE_NUCLEASE SUBUNIT A"/>
    <property type="match status" value="1"/>
</dbReference>
<dbReference type="PANTHER" id="PTHR11070">
    <property type="entry name" value="UVRD / RECB / PCRA DNA HELICASE FAMILY MEMBER"/>
    <property type="match status" value="1"/>
</dbReference>
<dbReference type="Pfam" id="PF12705">
    <property type="entry name" value="PDDEXK_1"/>
    <property type="match status" value="1"/>
</dbReference>
<dbReference type="Pfam" id="PF00580">
    <property type="entry name" value="UvrD-helicase"/>
    <property type="match status" value="1"/>
</dbReference>
<dbReference type="Pfam" id="PF13361">
    <property type="entry name" value="UvrD_C"/>
    <property type="match status" value="1"/>
</dbReference>
<dbReference type="SUPFAM" id="SSF52540">
    <property type="entry name" value="P-loop containing nucleoside triphosphate hydrolases"/>
    <property type="match status" value="1"/>
</dbReference>
<dbReference type="SUPFAM" id="SSF52980">
    <property type="entry name" value="Restriction endonuclease-like"/>
    <property type="match status" value="1"/>
</dbReference>
<dbReference type="PROSITE" id="PS51198">
    <property type="entry name" value="UVRD_HELICASE_ATP_BIND"/>
    <property type="match status" value="1"/>
</dbReference>
<dbReference type="PROSITE" id="PS51217">
    <property type="entry name" value="UVRD_HELICASE_CTER"/>
    <property type="match status" value="1"/>
</dbReference>
<organism>
    <name type="scientific">Streptococcus pyogenes serotype M12 (strain MGAS9429)</name>
    <dbReference type="NCBI Taxonomy" id="370551"/>
    <lineage>
        <taxon>Bacteria</taxon>
        <taxon>Bacillati</taxon>
        <taxon>Bacillota</taxon>
        <taxon>Bacilli</taxon>
        <taxon>Lactobacillales</taxon>
        <taxon>Streptococcaceae</taxon>
        <taxon>Streptococcus</taxon>
    </lineage>
</organism>
<accession>Q1JMH5</accession>
<keyword id="KW-0067">ATP-binding</keyword>
<keyword id="KW-0227">DNA damage</keyword>
<keyword id="KW-0234">DNA repair</keyword>
<keyword id="KW-0238">DNA-binding</keyword>
<keyword id="KW-0269">Exonuclease</keyword>
<keyword id="KW-0347">Helicase</keyword>
<keyword id="KW-0378">Hydrolase</keyword>
<keyword id="KW-0413">Isomerase</keyword>
<keyword id="KW-0540">Nuclease</keyword>
<keyword id="KW-0547">Nucleotide-binding</keyword>
<name>ADDA_STRPC</name>
<sequence>MLFNINEKGEPLVISFAPFLSPEAIKHLQENERCSDQSQKRTAQQIEAIYTSGQNILVSASAGSGKTFVMVERILDKILRGVSIDRLFISTFTVKAATELRERIENKLYSQIAQTTDFQMKVYLTEQLQSLGQADIGTMDAFAQKVVSRYGYSIGISSQFRIMQDKAEQDVLKQEVFSKLFSEFMNQKEAPVFRALVKNFSGNCKDTSAFRELVYTCYSFSQSTENPKIWLQENFLSAAKTYQRLEDIPDHDIELLLLAMQDTANQLRDVTDMEDYGQLTKAGSRSAKYTKHLTIIEKLSDWVRDFKCLYGKAGLDRLIRDVTGLIPSGNDVTVSKVKYPVFKTLHQKLKQFRHLETILMYQKDCFPLLEQLQDFVLAFSEAYLAVKIQESAFEFSDITHFAIKILEENTDIRQSYQQHYHEVMVDEYQDNNHMQERLLTLLSNGHNRFMVGDIKQSIYRFRQADPQIFNQKFRDYQKKTEQGKVILLKENFRSQSEVLNVSNAVFSHLMDESVGDVLYDEQHQLIAGSHAQTVPYLDRRAQLLLYNSDKDDGNAPSDSEGISFSEVTIVAKEIIKLHNDKGVPFEDITLLVSSRTRNDIISHTFNQYGIPIVTDGGQQNYLKSVEVMVMLDTLRTINNPRNDYALVALLRSPMFAFDEDDLARIALQKDNELDKDCLYDKIQRAVIGRGAHPELIHDTLLGKLNIFLKTLKSWRRYAKLGSLYDLIWKIFNDRFYFDFVASQAKAEQAQANLYALALRANQFEKSGYKGLYCFIKMIDKVLETQNDLADVEVAAPKQAVNLMTIHKSKGLQFPYVFILNCDKRFSMTDIHKSFILNRQHGIGIKYLADIKGLLGETTLNSVKVSMETLPYQLNKQELRLATLSEQMRLLYVAMTRAEKKVYFIGKASKSKSQDITDPKKLGKLLPLALREQLLTFQDWLLAIADVFSTEDLYFDVRFIEDSDLTQESVGRLQTPQLLNPDDLKDNRQSETIARALDMLEAVSQLNANYEAAIHLPTVRTPSQLKAAYEPLLEPIGVDIIEKSSRSLSDFTLPHFSKKVKVEASHIGSALHQLMQVLPLSKPINQQTLLDALREIDSNEEVKTALDLKKIESFFCDTSLGQFFQTYQKHLYREAPFAILKVDPISQEEYVLRGIIDAYFLFDDHIVLVDYKTDKYKQPIELKKRYQQQLELYAEALTQTYKLPVTKRYLVLMGGGKPEIVEV</sequence>
<comment type="function">
    <text evidence="1">The heterodimer acts as both an ATP-dependent DNA helicase and an ATP-dependent, dual-direction single-stranded exonuclease. Recognizes the chi site generating a DNA molecule suitable for the initiation of homologous recombination. The AddA nuclease domain is required for chi fragment generation; this subunit has the helicase and 3' -&gt; 5' nuclease activities.</text>
</comment>
<comment type="catalytic activity">
    <reaction evidence="1">
        <text>Couples ATP hydrolysis with the unwinding of duplex DNA by translocating in the 3'-5' direction.</text>
        <dbReference type="EC" id="5.6.2.4"/>
    </reaction>
</comment>
<comment type="catalytic activity">
    <reaction evidence="1">
        <text>ATP + H2O = ADP + phosphate + H(+)</text>
        <dbReference type="Rhea" id="RHEA:13065"/>
        <dbReference type="ChEBI" id="CHEBI:15377"/>
        <dbReference type="ChEBI" id="CHEBI:15378"/>
        <dbReference type="ChEBI" id="CHEBI:30616"/>
        <dbReference type="ChEBI" id="CHEBI:43474"/>
        <dbReference type="ChEBI" id="CHEBI:456216"/>
        <dbReference type="EC" id="5.6.2.4"/>
    </reaction>
</comment>
<comment type="cofactor">
    <cofactor evidence="1">
        <name>Mg(2+)</name>
        <dbReference type="ChEBI" id="CHEBI:18420"/>
    </cofactor>
</comment>
<comment type="subunit">
    <text evidence="1">Heterodimer of AddA and AddB/RexB.</text>
</comment>
<comment type="similarity">
    <text evidence="1">Belongs to the helicase family. AddA subfamily.</text>
</comment>
<gene>
    <name evidence="1" type="primary">addA</name>
    <name type="synonym">rexA</name>
    <name type="ordered locus">MGAS9429_Spy0649</name>
</gene>
<proteinExistence type="inferred from homology"/>
<feature type="chain" id="PRO_0000379342" description="ATP-dependent helicase/nuclease subunit A">
    <location>
        <begin position="1"/>
        <end position="1222"/>
    </location>
</feature>
<feature type="domain" description="UvrD-like helicase ATP-binding" evidence="1">
    <location>
        <begin position="39"/>
        <end position="495"/>
    </location>
</feature>
<feature type="domain" description="UvrD-like helicase C-terminal" evidence="1">
    <location>
        <begin position="524"/>
        <end position="810"/>
    </location>
</feature>
<feature type="binding site" evidence="1">
    <location>
        <begin position="60"/>
        <end position="67"/>
    </location>
    <ligand>
        <name>ATP</name>
        <dbReference type="ChEBI" id="CHEBI:30616"/>
    </ligand>
</feature>
<protein>
    <recommendedName>
        <fullName evidence="1">ATP-dependent helicase/nuclease subunit A</fullName>
        <ecNumber evidence="1">3.1.-.-</ecNumber>
        <ecNumber evidence="1">5.6.2.4</ecNumber>
    </recommendedName>
    <alternativeName>
        <fullName evidence="1">ATP-dependent helicase/nuclease AddA</fullName>
    </alternativeName>
    <alternativeName>
        <fullName evidence="1">DNA 3'-5' helicase AddA</fullName>
    </alternativeName>
</protein>
<reference key="1">
    <citation type="journal article" date="2006" name="Proc. Natl. Acad. Sci. U.S.A.">
        <title>Molecular genetic anatomy of inter- and intraserotype variation in the human bacterial pathogen group A Streptococcus.</title>
        <authorList>
            <person name="Beres S.B."/>
            <person name="Richter E.W."/>
            <person name="Nagiec M.J."/>
            <person name="Sumby P."/>
            <person name="Porcella S.F."/>
            <person name="DeLeo F.R."/>
            <person name="Musser J.M."/>
        </authorList>
    </citation>
    <scope>NUCLEOTIDE SEQUENCE [LARGE SCALE GENOMIC DNA]</scope>
    <source>
        <strain>MGAS9429</strain>
    </source>
</reference>
<evidence type="ECO:0000255" key="1">
    <source>
        <dbReference type="HAMAP-Rule" id="MF_01451"/>
    </source>
</evidence>